<evidence type="ECO:0000250" key="1">
    <source>
        <dbReference type="UniProtKB" id="Q9ZWS9"/>
    </source>
</evidence>
<evidence type="ECO:0000255" key="2">
    <source>
        <dbReference type="PROSITE-ProRule" id="PRU00169"/>
    </source>
</evidence>
<evidence type="ECO:0000269" key="3">
    <source>
    </source>
</evidence>
<evidence type="ECO:0000303" key="4">
    <source>
    </source>
</evidence>
<evidence type="ECO:0000305" key="5"/>
<evidence type="ECO:0000312" key="6">
    <source>
        <dbReference type="EMBL" id="CAI79412.1"/>
    </source>
</evidence>
<reference key="1">
    <citation type="journal article" date="2006" name="BMC Plant Biol.">
        <title>Molecular characterization and differential expression of cytokinin-responsive type-A response regulators in rice (Oryza sativa).</title>
        <authorList>
            <person name="Jain M."/>
            <person name="Tyagi A.K."/>
            <person name="Khurana J.P."/>
        </authorList>
    </citation>
    <scope>NUCLEOTIDE SEQUENCE [MRNA]</scope>
    <scope>TISSUE SPECIFICITY</scope>
    <scope>INDUCTION</scope>
    <source>
        <strain>cv. Pusa Basmati</strain>
    </source>
</reference>
<proteinExistence type="evidence at transcript level"/>
<sequence>MSSPHVLVVDDTHVDRHVVSMALMRHNVRVTAVESVMQALMFLDSEHDVDMIVSDYCMPDMTGYNLLMEVKKSPKLAHLPVVIASSDNIPERIRKCLDGGAKDYILKPVKIVDVPRIMKYI</sequence>
<organism>
    <name type="scientific">Oryza sativa subsp. indica</name>
    <name type="common">Rice</name>
    <dbReference type="NCBI Taxonomy" id="39946"/>
    <lineage>
        <taxon>Eukaryota</taxon>
        <taxon>Viridiplantae</taxon>
        <taxon>Streptophyta</taxon>
        <taxon>Embryophyta</taxon>
        <taxon>Tracheophyta</taxon>
        <taxon>Spermatophyta</taxon>
        <taxon>Magnoliopsida</taxon>
        <taxon>Liliopsida</taxon>
        <taxon>Poales</taxon>
        <taxon>Poaceae</taxon>
        <taxon>BOP clade</taxon>
        <taxon>Oryzoideae</taxon>
        <taxon>Oryzeae</taxon>
        <taxon>Oryzinae</taxon>
        <taxon>Oryza</taxon>
        <taxon>Oryza sativa</taxon>
    </lineage>
</organism>
<dbReference type="EMBL" id="AJ938077">
    <property type="protein sequence ID" value="CAI79412.1"/>
    <property type="molecule type" value="mRNA"/>
</dbReference>
<dbReference type="SMR" id="Q4GZK3"/>
<dbReference type="GO" id="GO:0009736">
    <property type="term" value="P:cytokinin-activated signaling pathway"/>
    <property type="evidence" value="ECO:0007669"/>
    <property type="project" value="UniProtKB-KW"/>
</dbReference>
<dbReference type="GO" id="GO:0000160">
    <property type="term" value="P:phosphorelay signal transduction system"/>
    <property type="evidence" value="ECO:0007669"/>
    <property type="project" value="UniProtKB-KW"/>
</dbReference>
<dbReference type="GO" id="GO:0009735">
    <property type="term" value="P:response to cytokinin"/>
    <property type="evidence" value="ECO:0000305"/>
    <property type="project" value="Gramene"/>
</dbReference>
<dbReference type="CDD" id="cd17581">
    <property type="entry name" value="REC_typeA_ARR"/>
    <property type="match status" value="1"/>
</dbReference>
<dbReference type="Gene3D" id="3.40.50.2300">
    <property type="match status" value="1"/>
</dbReference>
<dbReference type="InterPro" id="IPR045279">
    <property type="entry name" value="ARR-like"/>
</dbReference>
<dbReference type="InterPro" id="IPR011006">
    <property type="entry name" value="CheY-like_superfamily"/>
</dbReference>
<dbReference type="InterPro" id="IPR001789">
    <property type="entry name" value="Sig_transdc_resp-reg_receiver"/>
</dbReference>
<dbReference type="PANTHER" id="PTHR43874">
    <property type="entry name" value="TWO-COMPONENT RESPONSE REGULATOR"/>
    <property type="match status" value="1"/>
</dbReference>
<dbReference type="PANTHER" id="PTHR43874:SF33">
    <property type="entry name" value="TWO-COMPONENT RESPONSE REGULATOR ORR8"/>
    <property type="match status" value="1"/>
</dbReference>
<dbReference type="Pfam" id="PF00072">
    <property type="entry name" value="Response_reg"/>
    <property type="match status" value="1"/>
</dbReference>
<dbReference type="SMART" id="SM00448">
    <property type="entry name" value="REC"/>
    <property type="match status" value="1"/>
</dbReference>
<dbReference type="SUPFAM" id="SSF52172">
    <property type="entry name" value="CheY-like"/>
    <property type="match status" value="1"/>
</dbReference>
<dbReference type="PROSITE" id="PS50110">
    <property type="entry name" value="RESPONSE_REGULATORY"/>
    <property type="match status" value="1"/>
</dbReference>
<feature type="chain" id="PRO_0000433831" description="Two-component response regulator ORR8">
    <location>
        <begin position="1"/>
        <end position="121"/>
    </location>
</feature>
<feature type="domain" description="Response regulatory" evidence="2">
    <location>
        <begin position="5"/>
        <end position="121"/>
    </location>
</feature>
<feature type="modified residue" description="4-aspartylphosphate" evidence="2">
    <location>
        <position position="55"/>
    </location>
</feature>
<accession>Q4GZK3</accession>
<name>ORR8_ORYSI</name>
<comment type="function">
    <text evidence="1">Functions as a response regulator involved in His-to-Asp phosphorelay signal transduction system. Phosphorylation of the Asp residue in the receiver domain activates the ability of the protein to promote the transcription of target genes. Type-A response regulators seem to act as negative regulators of the cytokinin signaling.</text>
</comment>
<comment type="tissue specificity">
    <text evidence="3">Expressed in mature leaves, and at low levels in roots, shoots and flowers.</text>
</comment>
<comment type="induction">
    <text evidence="3">Not induced by cytokinin.</text>
</comment>
<comment type="PTM">
    <text evidence="5">Two-component system major event consists of a His-to-Asp phosphorelay between a sensor histidine kinase (HK) and a response regulator (RR). In plants, the His-to-Asp phosphorelay involves an additional intermediate named Histidine-containing phosphotransfer protein (HPt). This multistep phosphorelay consists of a His-Asp-His-Asp sequential transfer of a phosphate group between first a His and an Asp of the HK protein, followed by the transfer to a conserved His of the HPt protein and finally the transfer to an Asp in the receiver domain of the RR protein.</text>
</comment>
<comment type="similarity">
    <text evidence="5">Belongs to the ARR family. Type-A subfamily.</text>
</comment>
<protein>
    <recommendedName>
        <fullName evidence="5">Two-component response regulator ORR8</fullName>
    </recommendedName>
    <alternativeName>
        <fullName evidence="4">Type A response regulator 8</fullName>
        <shortName evidence="4">OsRR8</shortName>
    </alternativeName>
</protein>
<gene>
    <name evidence="6" type="primary">RR8</name>
</gene>
<keyword id="KW-0932">Cytokinin signaling pathway</keyword>
<keyword id="KW-0597">Phosphoprotein</keyword>
<keyword id="KW-0804">Transcription</keyword>
<keyword id="KW-0805">Transcription regulation</keyword>
<keyword id="KW-0902">Two-component regulatory system</keyword>